<proteinExistence type="inferred from homology"/>
<reference key="1">
    <citation type="journal article" date="2010" name="J. Proteome Res.">
        <title>Molecular diversification of peptide toxins from the tarantula Haplopelma hainanum (Ornithoctonus hainana) venom based on transcriptomic, peptidomic, and genomic analyses.</title>
        <authorList>
            <person name="Tang X."/>
            <person name="Zhang Y."/>
            <person name="Hu W."/>
            <person name="Xu D."/>
            <person name="Tao H."/>
            <person name="Yang X."/>
            <person name="Li Y."/>
            <person name="Jiang L."/>
            <person name="Liang S."/>
        </authorList>
    </citation>
    <scope>NUCLEOTIDE SEQUENCE [LARGE SCALE GENOMIC DNA]</scope>
    <source>
        <tissue>Venom gland</tissue>
    </source>
</reference>
<sequence length="88" mass="9886">MGIARILSAVLFLSVLFVVTFPTLLSADHHDGRIDTCRLPSDRGRCKASFERWYFNGTTCTKFVYGGYGGNDNRFPTEKACMKRCVKA</sequence>
<keyword id="KW-1015">Disulfide bond</keyword>
<keyword id="KW-0646">Protease inhibitor</keyword>
<keyword id="KW-0964">Secreted</keyword>
<keyword id="KW-0722">Serine protease inhibitor</keyword>
<keyword id="KW-0732">Signal</keyword>
<dbReference type="EMBL" id="GU293134">
    <property type="protein sequence ID" value="ADB56950.1"/>
    <property type="molecule type" value="Genomic_DNA"/>
</dbReference>
<dbReference type="SMR" id="D2Y2Q7"/>
<dbReference type="ArachnoServer" id="AS001791">
    <property type="toxin name" value="U15-theraphotoxin-Hhn1p"/>
</dbReference>
<dbReference type="GO" id="GO:0005576">
    <property type="term" value="C:extracellular region"/>
    <property type="evidence" value="ECO:0007669"/>
    <property type="project" value="UniProtKB-SubCell"/>
</dbReference>
<dbReference type="GO" id="GO:0015459">
    <property type="term" value="F:potassium channel regulator activity"/>
    <property type="evidence" value="ECO:0007669"/>
    <property type="project" value="UniProtKB-KW"/>
</dbReference>
<dbReference type="GO" id="GO:0004867">
    <property type="term" value="F:serine-type endopeptidase inhibitor activity"/>
    <property type="evidence" value="ECO:0007669"/>
    <property type="project" value="UniProtKB-KW"/>
</dbReference>
<dbReference type="GO" id="GO:0090729">
    <property type="term" value="F:toxin activity"/>
    <property type="evidence" value="ECO:0007669"/>
    <property type="project" value="UniProtKB-KW"/>
</dbReference>
<dbReference type="GO" id="GO:0044562">
    <property type="term" value="P:envenomation resulting in negative regulation of voltage-gated potassium channel activity in another organism"/>
    <property type="evidence" value="ECO:0007669"/>
    <property type="project" value="UniProtKB-ARBA"/>
</dbReference>
<dbReference type="CDD" id="cd22598">
    <property type="entry name" value="Kunitz_huwentoxin"/>
    <property type="match status" value="1"/>
</dbReference>
<dbReference type="FunFam" id="4.10.410.10:FF:000020">
    <property type="entry name" value="Collagen, type VI, alpha 3"/>
    <property type="match status" value="1"/>
</dbReference>
<dbReference type="Gene3D" id="4.10.410.10">
    <property type="entry name" value="Pancreatic trypsin inhibitor Kunitz domain"/>
    <property type="match status" value="1"/>
</dbReference>
<dbReference type="InterPro" id="IPR002223">
    <property type="entry name" value="Kunitz_BPTI"/>
</dbReference>
<dbReference type="InterPro" id="IPR036880">
    <property type="entry name" value="Kunitz_BPTI_sf"/>
</dbReference>
<dbReference type="PANTHER" id="PTHR47247">
    <property type="entry name" value="KUNITZ-TYPE PROTEASE INHIBITOR 2"/>
    <property type="match status" value="1"/>
</dbReference>
<dbReference type="PANTHER" id="PTHR47247:SF1">
    <property type="entry name" value="KUNITZ-TYPE PROTEASE INHIBITOR 2"/>
    <property type="match status" value="1"/>
</dbReference>
<dbReference type="Pfam" id="PF00014">
    <property type="entry name" value="Kunitz_BPTI"/>
    <property type="match status" value="1"/>
</dbReference>
<dbReference type="PRINTS" id="PR00759">
    <property type="entry name" value="BASICPTASE"/>
</dbReference>
<dbReference type="SMART" id="SM00131">
    <property type="entry name" value="KU"/>
    <property type="match status" value="1"/>
</dbReference>
<dbReference type="SUPFAM" id="SSF57362">
    <property type="entry name" value="BPTI-like"/>
    <property type="match status" value="1"/>
</dbReference>
<dbReference type="PROSITE" id="PS50279">
    <property type="entry name" value="BPTI_KUNITZ_2"/>
    <property type="match status" value="1"/>
</dbReference>
<evidence type="ECO:0000250" key="1"/>
<evidence type="ECO:0000250" key="2">
    <source>
        <dbReference type="UniProtKB" id="P68425"/>
    </source>
</evidence>
<evidence type="ECO:0000255" key="3"/>
<evidence type="ECO:0000255" key="4">
    <source>
        <dbReference type="PROSITE-ProRule" id="PRU00031"/>
    </source>
</evidence>
<evidence type="ECO:0000305" key="5"/>
<evidence type="ECO:0000305" key="6">
    <source>
    </source>
</evidence>
<name>VKTP1_CYRHA</name>
<feature type="signal peptide" evidence="3">
    <location>
        <begin position="1"/>
        <end position="27"/>
    </location>
</feature>
<feature type="propeptide" id="PRO_0000401008" evidence="1">
    <location>
        <begin position="28"/>
        <end position="33"/>
    </location>
</feature>
<feature type="peptide" id="PRO_0000401009" description="Kunitz-type U15-theraphotoxin-Hhn1p">
    <location>
        <begin position="34"/>
        <end position="88"/>
    </location>
</feature>
<feature type="domain" description="BPTI/Kunitz inhibitor" evidence="4">
    <location>
        <begin position="37"/>
        <end position="85"/>
    </location>
</feature>
<feature type="site" description="Reactive bond for trypsin" evidence="1">
    <location>
        <begin position="47"/>
        <end position="48"/>
    </location>
</feature>
<feature type="disulfide bond" evidence="4">
    <location>
        <begin position="37"/>
        <end position="85"/>
    </location>
</feature>
<feature type="disulfide bond" evidence="4">
    <location>
        <begin position="60"/>
        <end position="81"/>
    </location>
</feature>
<organism>
    <name type="scientific">Cyriopagopus hainanus</name>
    <name type="common">Chinese bird spider</name>
    <name type="synonym">Haplopelma hainanum</name>
    <dbReference type="NCBI Taxonomy" id="209901"/>
    <lineage>
        <taxon>Eukaryota</taxon>
        <taxon>Metazoa</taxon>
        <taxon>Ecdysozoa</taxon>
        <taxon>Arthropoda</taxon>
        <taxon>Chelicerata</taxon>
        <taxon>Arachnida</taxon>
        <taxon>Araneae</taxon>
        <taxon>Mygalomorphae</taxon>
        <taxon>Theraphosidae</taxon>
        <taxon>Haplopelma</taxon>
    </lineage>
</organism>
<accession>D2Y2Q7</accession>
<protein>
    <recommendedName>
        <fullName>Kunitz-type U15-theraphotoxin-Hhn1p</fullName>
        <shortName>U15-TRTX-Hhn1p</shortName>
    </recommendedName>
    <alternativeName>
        <fullName>Kunitz-type serine protease inhibitor hainantoxin-XI-16</fullName>
        <shortName>HNTX-XI-16</shortName>
    </alternativeName>
</protein>
<comment type="function">
    <text evidence="2">Serine protease inhibitor that inhibits trypsin at a molar ratio of 1:1.</text>
</comment>
<comment type="subcellular location">
    <subcellularLocation>
        <location evidence="6">Secreted</location>
    </subcellularLocation>
</comment>
<comment type="tissue specificity">
    <text evidence="6">Expressed by the venom gland.</text>
</comment>
<comment type="similarity">
    <text evidence="5">Belongs to the venom Kunitz-type family. 01 (intermediate) subfamily.</text>
</comment>